<feature type="signal peptide" evidence="2">
    <location>
        <begin position="1"/>
        <end position="23"/>
    </location>
</feature>
<feature type="chain" id="PRO_5002964807" description="Periplasmic chaperone Spy">
    <location>
        <begin position="24"/>
        <end position="161"/>
    </location>
</feature>
<feature type="region of interest" description="Disordered" evidence="3">
    <location>
        <begin position="140"/>
        <end position="161"/>
    </location>
</feature>
<feature type="compositionally biased region" description="Basic and acidic residues" evidence="3">
    <location>
        <begin position="142"/>
        <end position="151"/>
    </location>
</feature>
<feature type="helix" evidence="6">
    <location>
        <begin position="61"/>
        <end position="72"/>
    </location>
</feature>
<feature type="strand" evidence="6">
    <location>
        <begin position="73"/>
        <end position="76"/>
    </location>
</feature>
<feature type="helix" evidence="6">
    <location>
        <begin position="83"/>
        <end position="91"/>
    </location>
</feature>
<feature type="helix" evidence="6">
    <location>
        <begin position="98"/>
        <end position="105"/>
    </location>
</feature>
<feature type="helix" evidence="6">
    <location>
        <begin position="106"/>
        <end position="108"/>
    </location>
</feature>
<feature type="helix" evidence="6">
    <location>
        <begin position="110"/>
        <end position="127"/>
    </location>
</feature>
<feature type="helix" evidence="6">
    <location>
        <begin position="132"/>
        <end position="141"/>
    </location>
</feature>
<organism>
    <name type="scientific">Escherichia coli (strain B / BL21-DE3)</name>
    <dbReference type="NCBI Taxonomy" id="469008"/>
    <lineage>
        <taxon>Bacteria</taxon>
        <taxon>Pseudomonadati</taxon>
        <taxon>Pseudomonadota</taxon>
        <taxon>Gammaproteobacteria</taxon>
        <taxon>Enterobacterales</taxon>
        <taxon>Enterobacteriaceae</taxon>
        <taxon>Escherichia</taxon>
    </lineage>
</organism>
<comment type="function">
    <text evidence="1">An ATP-independent periplasmic chaperone, decreases protein aggregation and helps protein refolding. Binds substrate over a large region.</text>
</comment>
<comment type="subunit">
    <text evidence="4">Homodimer.</text>
</comment>
<comment type="subcellular location">
    <subcellularLocation>
        <location evidence="1">Periplasm</location>
    </subcellularLocation>
</comment>
<comment type="domain">
    <text evidence="4">Has an elongated cradle shape.</text>
</comment>
<comment type="similarity">
    <text evidence="5">Belongs to the CpxP/Spy family.</text>
</comment>
<gene>
    <name type="primary">spy</name>
    <name type="ordered locus">ECBD_1902</name>
</gene>
<dbReference type="EMBL" id="CP001665">
    <property type="protein sequence ID" value="ACT28949.1"/>
    <property type="molecule type" value="Genomic_DNA"/>
</dbReference>
<dbReference type="RefSeq" id="WP_001228987.1">
    <property type="nucleotide sequence ID" value="NZ_JADXDS010000003.1"/>
</dbReference>
<dbReference type="PDB" id="3OEO">
    <property type="method" value="X-ray"/>
    <property type="resolution" value="2.70 A"/>
    <property type="chains" value="A/B/C/D=24-161"/>
</dbReference>
<dbReference type="PDBsum" id="3OEO"/>
<dbReference type="SMR" id="C6ECL5"/>
<dbReference type="KEGG" id="ebd:ECBD_1902"/>
<dbReference type="KEGG" id="ebe:B21_01700"/>
<dbReference type="KEGG" id="ebl:ECD_01712"/>
<dbReference type="PATRIC" id="fig|469008.15.peg.1733"/>
<dbReference type="eggNOG" id="COG3678">
    <property type="taxonomic scope" value="Bacteria"/>
</dbReference>
<dbReference type="HOGENOM" id="CLU_124352_1_0_6"/>
<dbReference type="EvolutionaryTrace" id="C6ECL5"/>
<dbReference type="GO" id="GO:0030288">
    <property type="term" value="C:outer membrane-bounded periplasmic space"/>
    <property type="evidence" value="ECO:0007669"/>
    <property type="project" value="TreeGrafter"/>
</dbReference>
<dbReference type="GO" id="GO:0051082">
    <property type="term" value="F:unfolded protein binding"/>
    <property type="evidence" value="ECO:0007669"/>
    <property type="project" value="TreeGrafter"/>
</dbReference>
<dbReference type="CDD" id="cd09916">
    <property type="entry name" value="CpxP_like"/>
    <property type="match status" value="1"/>
</dbReference>
<dbReference type="DisProt" id="DP02077"/>
<dbReference type="FunFam" id="1.20.120.1490:FF:000002">
    <property type="entry name" value="ATP-independent periplasmic protein-refolding chaperone"/>
    <property type="match status" value="1"/>
</dbReference>
<dbReference type="Gene3D" id="1.20.120.1490">
    <property type="match status" value="1"/>
</dbReference>
<dbReference type="InterPro" id="IPR052211">
    <property type="entry name" value="Cpx_auxiliary_protein"/>
</dbReference>
<dbReference type="InterPro" id="IPR012899">
    <property type="entry name" value="LTXXQ"/>
</dbReference>
<dbReference type="NCBIfam" id="NF007769">
    <property type="entry name" value="PRK10455.1"/>
    <property type="match status" value="1"/>
</dbReference>
<dbReference type="PANTHER" id="PTHR38102">
    <property type="entry name" value="PERIPLASMIC CHAPERONE SPY"/>
    <property type="match status" value="1"/>
</dbReference>
<dbReference type="PANTHER" id="PTHR38102:SF1">
    <property type="entry name" value="PERIPLASMIC CHAPERONE SPY"/>
    <property type="match status" value="1"/>
</dbReference>
<dbReference type="Pfam" id="PF07813">
    <property type="entry name" value="LTXXQ"/>
    <property type="match status" value="1"/>
</dbReference>
<dbReference type="PIRSF" id="PIRSF034445">
    <property type="entry name" value="CpxP_Spy"/>
    <property type="match status" value="1"/>
</dbReference>
<accession>C6ECL5</accession>
<accession>C5W4R8</accession>
<keyword id="KW-0002">3D-structure</keyword>
<keyword id="KW-0143">Chaperone</keyword>
<keyword id="KW-0574">Periplasm</keyword>
<keyword id="KW-0732">Signal</keyword>
<keyword id="KW-0346">Stress response</keyword>
<proteinExistence type="evidence at protein level"/>
<sequence length="161" mass="18229">MRKLTALFVASTLALGAANLAHAADTTTAAPADAKPMMHHKGKFGPHQDMMFKDLNLTDAQKQQIREIMKGQRDQMKRPPLEERRAMHDIITSDTFDKVKAEAQIAKMEEQRKANMLAHMETQNKIYNILTPEQKKQFNANFEKRLTERPAAKGKMPATAE</sequence>
<protein>
    <recommendedName>
        <fullName>Periplasmic chaperone Spy</fullName>
    </recommendedName>
    <alternativeName>
        <fullName>Spheroplast protein Y</fullName>
    </alternativeName>
</protein>
<reference key="1">
    <citation type="submission" date="2009-07" db="EMBL/GenBank/DDBJ databases">
        <title>Complete sequence of Escherichia coli BL21(DE3).</title>
        <authorList>
            <person name="Lucas S."/>
            <person name="Copeland A."/>
            <person name="Lapidus A."/>
            <person name="Glavina del Rio T."/>
            <person name="Dalin E."/>
            <person name="Tice H."/>
            <person name="Bruce D."/>
            <person name="Goodwin L."/>
            <person name="Pitluck S."/>
            <person name="LaButti K.M."/>
            <person name="Clum A."/>
            <person name="Larimer F."/>
            <person name="Land M."/>
            <person name="Hauser L."/>
            <person name="Kyrpides N."/>
            <person name="Anderson I."/>
            <person name="Sorek R."/>
            <person name="Rubin E."/>
        </authorList>
    </citation>
    <scope>NUCLEOTIDE SEQUENCE [LARGE SCALE GENOMIC DNA]</scope>
    <source>
        <strain>B / BL21-DE3</strain>
    </source>
</reference>
<reference key="2">
    <citation type="journal article" date="2010" name="Protein Sci.">
        <title>The crystal structure Escherichia coli Spy.</title>
        <authorList>
            <person name="Kwon E."/>
            <person name="Kim D.Y."/>
            <person name="Gross C.A."/>
            <person name="Gross J.D."/>
            <person name="Kim K.K."/>
        </authorList>
    </citation>
    <scope>X-RAY CRYSTALLOGRAPHY (2.70 ANGSTROMS) OF 24-161</scope>
    <scope>SUBUNIT</scope>
    <scope>DOMAIN</scope>
    <source>
        <strain>B / BL21-DE3</strain>
    </source>
</reference>
<evidence type="ECO:0000250" key="1">
    <source>
        <dbReference type="UniProtKB" id="P77754"/>
    </source>
</evidence>
<evidence type="ECO:0000255" key="2"/>
<evidence type="ECO:0000256" key="3">
    <source>
        <dbReference type="SAM" id="MobiDB-lite"/>
    </source>
</evidence>
<evidence type="ECO:0000269" key="4">
    <source>
    </source>
</evidence>
<evidence type="ECO:0000305" key="5"/>
<evidence type="ECO:0007829" key="6">
    <source>
        <dbReference type="PDB" id="3OEO"/>
    </source>
</evidence>
<name>SPY_ECOBD</name>